<reference key="1">
    <citation type="journal article" date="1998" name="FEMS Microbiol. Lett.">
        <title>Expression of genes from Rahnella aquatilis that are necessary for mineral phosphate solubilization in Escherichia coli.</title>
        <authorList>
            <person name="Kim K.Y."/>
            <person name="Jordan D."/>
            <person name="Krishnan H.B."/>
        </authorList>
    </citation>
    <scope>NUCLEOTIDE SEQUENCE [GENOMIC DNA]</scope>
    <source>
        <strain>ISL19</strain>
    </source>
</reference>
<evidence type="ECO:0000250" key="1"/>
<evidence type="ECO:0000255" key="2">
    <source>
        <dbReference type="PROSITE-ProRule" id="PRU01266"/>
    </source>
</evidence>
<evidence type="ECO:0000305" key="3"/>
<comment type="function">
    <text>Catalyzes the cross-linking of a glutamate residue and a tyrosine residue in the PqqA protein as part of the biosynthesis of pyrroloquinoline quinone (PQQ).</text>
</comment>
<comment type="catalytic activity">
    <reaction>
        <text>[PQQ precursor protein] + S-adenosyl-L-methionine = E-Y cross-linked-[PQQ precursor protein] + 5'-deoxyadenosine + L-methionine + H(+)</text>
        <dbReference type="Rhea" id="RHEA:56836"/>
        <dbReference type="Rhea" id="RHEA-COMP:14800"/>
        <dbReference type="Rhea" id="RHEA-COMP:14801"/>
        <dbReference type="ChEBI" id="CHEBI:15378"/>
        <dbReference type="ChEBI" id="CHEBI:17319"/>
        <dbReference type="ChEBI" id="CHEBI:57844"/>
        <dbReference type="ChEBI" id="CHEBI:59789"/>
        <dbReference type="ChEBI" id="CHEBI:141026"/>
        <dbReference type="ChEBI" id="CHEBI:141027"/>
        <dbReference type="EC" id="1.21.98.4"/>
    </reaction>
</comment>
<comment type="cofactor">
    <cofactor evidence="1">
        <name>[4Fe-4S] cluster</name>
        <dbReference type="ChEBI" id="CHEBI:49883"/>
    </cofactor>
    <text evidence="1">Binds 1 [4Fe-4S] cluster. The cluster is coordinated with 3 cysteines and an exchangeable S-adenosyl-L-methionine.</text>
</comment>
<comment type="pathway">
    <text>Cofactor biosynthesis; pyrroloquinoline quinone biosynthesis.</text>
</comment>
<comment type="subunit">
    <text>Interacts with PqqD. The interaction is necessary for activity of PqqE.</text>
</comment>
<comment type="similarity">
    <text evidence="3">Belongs to the radical SAM superfamily. PqqE family.</text>
</comment>
<comment type="caution">
    <text evidence="3">An expected iron ligand Cys residue was not found at position 29 in this sequence.</text>
</comment>
<comment type="sequence caution" evidence="3">
    <conflict type="erroneous initiation">
        <sequence resource="EMBL-CDS" id="AAC38153"/>
    </conflict>
</comment>
<organism>
    <name type="scientific">Rahnella aquatilis</name>
    <dbReference type="NCBI Taxonomy" id="34038"/>
    <lineage>
        <taxon>Bacteria</taxon>
        <taxon>Pseudomonadati</taxon>
        <taxon>Pseudomonadota</taxon>
        <taxon>Gammaproteobacteria</taxon>
        <taxon>Enterobacterales</taxon>
        <taxon>Yersiniaceae</taxon>
        <taxon>Rahnella</taxon>
    </lineage>
</organism>
<protein>
    <recommendedName>
        <fullName>PqqA peptide cyclase</fullName>
        <ecNumber>1.21.98.4</ecNumber>
    </recommendedName>
    <alternativeName>
        <fullName>Coenzyme PQQ synthesis protein E</fullName>
    </alternativeName>
    <alternativeName>
        <fullName>Pyrroloquinoline quinone biosynthesis protein E</fullName>
    </alternativeName>
</protein>
<accession>O33506</accession>
<gene>
    <name type="primary">pqqE</name>
</gene>
<dbReference type="EC" id="1.21.98.4"/>
<dbReference type="EMBL" id="AF007584">
    <property type="protein sequence ID" value="AAC38153.1"/>
    <property type="status" value="ALT_INIT"/>
    <property type="molecule type" value="Genomic_DNA"/>
</dbReference>
<dbReference type="SMR" id="O33506"/>
<dbReference type="UniPathway" id="UPA00539"/>
<dbReference type="GO" id="GO:0051539">
    <property type="term" value="F:4 iron, 4 sulfur cluster binding"/>
    <property type="evidence" value="ECO:0007669"/>
    <property type="project" value="UniProtKB-KW"/>
</dbReference>
<dbReference type="GO" id="GO:0009975">
    <property type="term" value="F:cyclase activity"/>
    <property type="evidence" value="ECO:0007669"/>
    <property type="project" value="UniProtKB-UniRule"/>
</dbReference>
<dbReference type="GO" id="GO:0046872">
    <property type="term" value="F:metal ion binding"/>
    <property type="evidence" value="ECO:0007669"/>
    <property type="project" value="UniProtKB-KW"/>
</dbReference>
<dbReference type="GO" id="GO:0016491">
    <property type="term" value="F:oxidoreductase activity"/>
    <property type="evidence" value="ECO:0007669"/>
    <property type="project" value="UniProtKB-KW"/>
</dbReference>
<dbReference type="GO" id="GO:1904047">
    <property type="term" value="F:S-adenosyl-L-methionine binding"/>
    <property type="evidence" value="ECO:0007669"/>
    <property type="project" value="UniProtKB-UniRule"/>
</dbReference>
<dbReference type="GO" id="GO:0018189">
    <property type="term" value="P:pyrroloquinoline quinone biosynthetic process"/>
    <property type="evidence" value="ECO:0007669"/>
    <property type="project" value="UniProtKB-UniRule"/>
</dbReference>
<dbReference type="CDD" id="cd01335">
    <property type="entry name" value="Radical_SAM"/>
    <property type="match status" value="1"/>
</dbReference>
<dbReference type="CDD" id="cd21119">
    <property type="entry name" value="SPASM_PqqE"/>
    <property type="match status" value="1"/>
</dbReference>
<dbReference type="Gene3D" id="3.20.20.70">
    <property type="entry name" value="Aldolase class I"/>
    <property type="match status" value="1"/>
</dbReference>
<dbReference type="HAMAP" id="MF_00660">
    <property type="entry name" value="PqqE"/>
    <property type="match status" value="1"/>
</dbReference>
<dbReference type="InterPro" id="IPR023885">
    <property type="entry name" value="4Fe4S-binding_SPASM_dom"/>
</dbReference>
<dbReference type="InterPro" id="IPR013785">
    <property type="entry name" value="Aldolase_TIM"/>
</dbReference>
<dbReference type="InterPro" id="IPR006638">
    <property type="entry name" value="Elp3/MiaA/NifB-like_rSAM"/>
</dbReference>
<dbReference type="InterPro" id="IPR011843">
    <property type="entry name" value="PQQ_synth_PqqE_bac"/>
</dbReference>
<dbReference type="InterPro" id="IPR017200">
    <property type="entry name" value="PqqE-like"/>
</dbReference>
<dbReference type="InterPro" id="IPR050377">
    <property type="entry name" value="Radical_SAM_PqqE_MftC-like"/>
</dbReference>
<dbReference type="InterPro" id="IPR007197">
    <property type="entry name" value="rSAM"/>
</dbReference>
<dbReference type="NCBIfam" id="TIGR02109">
    <property type="entry name" value="PQQ_syn_pqqE"/>
    <property type="match status" value="1"/>
</dbReference>
<dbReference type="PANTHER" id="PTHR11228:SF7">
    <property type="entry name" value="PQQA PEPTIDE CYCLASE"/>
    <property type="match status" value="1"/>
</dbReference>
<dbReference type="PANTHER" id="PTHR11228">
    <property type="entry name" value="RADICAL SAM DOMAIN PROTEIN"/>
    <property type="match status" value="1"/>
</dbReference>
<dbReference type="Pfam" id="PF04055">
    <property type="entry name" value="Radical_SAM"/>
    <property type="match status" value="1"/>
</dbReference>
<dbReference type="Pfam" id="PF13186">
    <property type="entry name" value="SPASM"/>
    <property type="match status" value="1"/>
</dbReference>
<dbReference type="PIRSF" id="PIRSF037420">
    <property type="entry name" value="PQQ_syn_pqqE"/>
    <property type="match status" value="1"/>
</dbReference>
<dbReference type="SMART" id="SM00729">
    <property type="entry name" value="Elp3"/>
    <property type="match status" value="1"/>
</dbReference>
<dbReference type="SUPFAM" id="SSF102114">
    <property type="entry name" value="Radical SAM enzymes"/>
    <property type="match status" value="1"/>
</dbReference>
<dbReference type="PROSITE" id="PS51918">
    <property type="entry name" value="RADICAL_SAM"/>
    <property type="match status" value="1"/>
</dbReference>
<keyword id="KW-0004">4Fe-4S</keyword>
<keyword id="KW-0408">Iron</keyword>
<keyword id="KW-0411">Iron-sulfur</keyword>
<keyword id="KW-0479">Metal-binding</keyword>
<keyword id="KW-0560">Oxidoreductase</keyword>
<keyword id="KW-0884">PQQ biosynthesis</keyword>
<keyword id="KW-0949">S-adenosyl-L-methionine</keyword>
<feature type="chain" id="PRO_0000219949" description="PqqA peptide cyclase">
    <location>
        <begin position="1"/>
        <end position="377"/>
    </location>
</feature>
<feature type="domain" description="Radical SAM core" evidence="2">
    <location>
        <begin position="8"/>
        <end position="224"/>
    </location>
</feature>
<feature type="binding site" evidence="1">
    <location>
        <position position="22"/>
    </location>
    <ligand>
        <name>[4Fe-4S] cluster</name>
        <dbReference type="ChEBI" id="CHEBI:49883"/>
        <note>4Fe-4S-S-AdoMet</note>
    </ligand>
</feature>
<feature type="binding site" evidence="1">
    <location>
        <position position="26"/>
    </location>
    <ligand>
        <name>[4Fe-4S] cluster</name>
        <dbReference type="ChEBI" id="CHEBI:49883"/>
        <note>4Fe-4S-S-AdoMet</note>
    </ligand>
</feature>
<sequence>MNLLKPAVKPPSWLLAELTYRCPVQCPYWSNPLDFAKQEKELTTAQWIKVFEEAREMGAVQIGFSGGEPLVRKDLPELIRGARDLGFYTNLITSGIGLTEKKIDAFAQAGLDHIQISFQASDEELNAALAGNAKAFQQKLAMAKAVKAHGYPMVLNFVLHRHNIDQIDKIIDLSIELDADDVELATCQFYGWAQLNREGLLPTREQIARAEDVVHQYREKMAGTGNLANLLFVTPDYYEERPKGCMGGWGAIFLSVTPEGMALPCHSARQLPVEFPSVLENTLQEIWYDSFGFNKYRGFDWMPEPCRSCSEKEKDFGGCRCQAFMLTGNADNADPVCSKSEHHGMILAAREQANCTNIQINQLQFRNRANSQLIFKG</sequence>
<proteinExistence type="inferred from homology"/>
<name>PQQE_RAHAQ</name>